<gene>
    <name type="primary">IE</name>
</gene>
<keyword id="KW-0238">DNA-binding</keyword>
<keyword id="KW-0244">Early protein</keyword>
<keyword id="KW-1048">Host nucleus</keyword>
<keyword id="KW-0597">Phosphoprotein</keyword>
<keyword id="KW-0804">Transcription</keyword>
<keyword id="KW-0805">Transcription regulation</keyword>
<protein>
    <recommendedName>
        <fullName>Major viral transcription factor ICP4 homolog</fullName>
    </recommendedName>
</protein>
<name>ICP4_SUHVK</name>
<dbReference type="EMBL" id="M34651">
    <property type="protein sequence ID" value="AAA47470.1"/>
    <property type="molecule type" value="Genomic_DNA"/>
</dbReference>
<dbReference type="PIR" id="A45344">
    <property type="entry name" value="A45344"/>
</dbReference>
<dbReference type="SMR" id="P33479"/>
<dbReference type="KEGG" id="vg:2952493"/>
<dbReference type="KEGG" id="vg:2952540"/>
<dbReference type="GO" id="GO:0042025">
    <property type="term" value="C:host cell nucleus"/>
    <property type="evidence" value="ECO:0007669"/>
    <property type="project" value="UniProtKB-SubCell"/>
</dbReference>
<dbReference type="GO" id="GO:0003677">
    <property type="term" value="F:DNA binding"/>
    <property type="evidence" value="ECO:0007669"/>
    <property type="project" value="UniProtKB-KW"/>
</dbReference>
<dbReference type="GO" id="GO:0039695">
    <property type="term" value="P:DNA-templated viral transcription"/>
    <property type="evidence" value="ECO:0000250"/>
    <property type="project" value="UniProtKB"/>
</dbReference>
<dbReference type="GO" id="GO:0045893">
    <property type="term" value="P:positive regulation of DNA-templated transcription"/>
    <property type="evidence" value="ECO:0007669"/>
    <property type="project" value="InterPro"/>
</dbReference>
<dbReference type="InterPro" id="IPR005205">
    <property type="entry name" value="Herpes_ICP4_C"/>
</dbReference>
<dbReference type="InterPro" id="IPR005206">
    <property type="entry name" value="Herpes_ICP4_N"/>
</dbReference>
<dbReference type="Pfam" id="PF03585">
    <property type="entry name" value="Herpes_ICP4_C"/>
    <property type="match status" value="2"/>
</dbReference>
<dbReference type="Pfam" id="PF03584">
    <property type="entry name" value="Herpes_ICP4_N"/>
    <property type="match status" value="1"/>
</dbReference>
<comment type="function">
    <text>This IE protein is a multifunctional protein capable of migrating to the nucleus, binding to DNA, trans-activating other viral genes, and autoregulating its own synthesis.</text>
</comment>
<comment type="subcellular location">
    <subcellularLocation>
        <location>Host nucleus</location>
    </subcellularLocation>
</comment>
<comment type="PTM">
    <text>A long stretch of serine residues may be a major site of phosphorylation.</text>
</comment>
<comment type="similarity">
    <text evidence="2">Belongs to the herpesviridae ICP4 family.</text>
</comment>
<proteinExistence type="inferred from homology"/>
<sequence>MADDLFDFIETEGNFSQLLAAAAAAEEEGIASGPDGGSQGSRRRGSSGEDLLFGPGGLFSDDAAEAEAAVLAAAAGATRPPRPPSAQQQQQPRRGSGEIVVLDDEDEEEDEPGSPAAGSPGRALHQGSEHGHLVLGPRSRAGSGPRPPTPAALAAAEAGAPGGPGRSSPSAASPASSSGSPGPSAAPRRWSPARGDPVGEPGPAARPRTPAPPAQPAAVAAAPARRGPASPASPAAGPVSAPGGGGAPSAGGDRGRHHHQHREPLLDEPAAARRLDPRPLGARSPVSSNPNSNSNSTTTVAVETVARGPEKDEDGLGLAGDGGAPPQRQPRRRRAGEGALRRGRGFSSSSSSGSDSDLSPARSPSAPRAPAAAARRSASSSSSSSSSSSSSSSSSSSEGEEDEGVRPGAPLARAGPPPSPPAPAAAPRPSASSASSSAAASPAPAPEPARPPRRKRRSTNNHLSLMADGPPPTDGPLLTPLGEPWPGSDPPADGRVRYGGAGDSREGLWDEDDVRQAAARYRAAAGPVPVFIPEMGDSRKQHEALVRLIYSGAAGEAMSWLQNPRMQAPDQRFNQFCQRRVHAPHGHGSFITGSVTPPLPHIGDAMAAQDPLWALPHAVSAVAMSRRYDRTQKTFILQSLRRAYADMAYPGRAADPRAGEATVEALCARVRAAFAAAQPGRVPRELADACVLACRGVLERLLPCPLRLPAPARAPAALGPACLEEVTAALLALRDAIPGAGPAERRQAADSVALVARTVAPLVRYSVDGARAREAAWTYAAALFAPANVAAARLAEAAARPGPAEPAPGLPPLWPEQPGLVVPAPAPAAAGAPSGLPGSGPSSPASTKSSSSTKSSSSTKSGLSGSSGYASSPAAGPDPAPERRKKKRRAPGARRPGDGEEDEGLSGAALRGDGHGHRDDEEDRGPRRKRRSLGLGPAPDPAPALLSSSSSSSEDDRLRRPLGPMPEHPAPDGGFRRVPAGETHTPRPSEAALAAYCPPEVARALVDQEVFPELWRPALTFDPAALAHIAARRGAPLRRRAAWMRQIADPEDVRVVVLYDPLPHEELCAEPAEGAPRPAWDPRRGGLSALLAAFAHRLCTPDSHAWAGNWTGRPDIGRLNAQGVLLLSARDLGFAGAVEYLCSRLGAARRRLIVLDTIEDWPADGPAVGDYHVYVRVRLDPAAQCAVRWPGCRELRAAVLDSSSIVGPACFARVEASFARLHPGAEPLRLCRQDNVRYTVSTRAGPRTPVPLPPRAYRQRVLPTVDGCKDMARQRSALGLGDPDFDAGAAFGHRAANRWGLGAPLRPVFVSCGRRGLAELRGPEGLPAELRAFCAAALLEPDAEAAPLVLTPGAVAAAGAPPAVLWDFAPFETSVRAAAGGAVETHRPAGASGAGAGPGEDGDSVEIVGVRGGDGRPRGPLGPIKVEAISDDEEAEDAGNPYLLLR</sequence>
<organism>
    <name type="scientific">Suid herpesvirus 1 (strain Kaplan)</name>
    <name type="common">SuHV-1</name>
    <name type="synonym">Pseudorabies virus (strain Kaplan)</name>
    <dbReference type="NCBI Taxonomy" id="33703"/>
    <lineage>
        <taxon>Viruses</taxon>
        <taxon>Duplodnaviria</taxon>
        <taxon>Heunggongvirae</taxon>
        <taxon>Peploviricota</taxon>
        <taxon>Herviviricetes</taxon>
        <taxon>Herpesvirales</taxon>
        <taxon>Orthoherpesviridae</taxon>
        <taxon>Alphaherpesvirinae</taxon>
        <taxon>Varicellovirus</taxon>
        <taxon>Varicellovirus suidalpha1</taxon>
        <taxon>Suid herpesvirus 1</taxon>
    </lineage>
</organism>
<organismHost>
    <name type="scientific">Sus scrofa</name>
    <name type="common">Pig</name>
    <dbReference type="NCBI Taxonomy" id="9823"/>
</organismHost>
<evidence type="ECO:0000256" key="1">
    <source>
        <dbReference type="SAM" id="MobiDB-lite"/>
    </source>
</evidence>
<evidence type="ECO:0000305" key="2"/>
<reference key="1">
    <citation type="journal article" date="1990" name="Virology">
        <title>Pseudorabies virus immediate-early gene overlaps with an oppositely oriented open reading frame: characterization of their promoter and enhancer regions.</title>
        <authorList>
            <person name="Vlcek C."/>
            <person name="Kozmik Z."/>
            <person name="Paces V."/>
            <person name="Schirm S."/>
            <person name="Schwyzer M."/>
        </authorList>
    </citation>
    <scope>NUCLEOTIDE SEQUENCE [GENOMIC DNA]</scope>
</reference>
<accession>P33479</accession>
<feature type="chain" id="PRO_0000115822" description="Major viral transcription factor ICP4 homolog">
    <location>
        <begin position="1"/>
        <end position="1446"/>
    </location>
</feature>
<feature type="region of interest" description="Disordered" evidence="1">
    <location>
        <begin position="25"/>
        <end position="59"/>
    </location>
</feature>
<feature type="region of interest" description="Disordered" evidence="1">
    <location>
        <begin position="73"/>
        <end position="493"/>
    </location>
</feature>
<feature type="region of interest" description="Disordered" evidence="1">
    <location>
        <begin position="801"/>
        <end position="987"/>
    </location>
</feature>
<feature type="region of interest" description="Disordered" evidence="1">
    <location>
        <begin position="1385"/>
        <end position="1446"/>
    </location>
</feature>
<feature type="compositionally biased region" description="Low complexity" evidence="1">
    <location>
        <begin position="73"/>
        <end position="94"/>
    </location>
</feature>
<feature type="compositionally biased region" description="Acidic residues" evidence="1">
    <location>
        <begin position="101"/>
        <end position="112"/>
    </location>
</feature>
<feature type="compositionally biased region" description="Low complexity" evidence="1">
    <location>
        <begin position="166"/>
        <end position="189"/>
    </location>
</feature>
<feature type="compositionally biased region" description="Low complexity" evidence="1">
    <location>
        <begin position="216"/>
        <end position="241"/>
    </location>
</feature>
<feature type="compositionally biased region" description="Basic and acidic residues" evidence="1">
    <location>
        <begin position="262"/>
        <end position="277"/>
    </location>
</feature>
<feature type="compositionally biased region" description="Low complexity" evidence="1">
    <location>
        <begin position="284"/>
        <end position="306"/>
    </location>
</feature>
<feature type="compositionally biased region" description="Low complexity" evidence="1">
    <location>
        <begin position="345"/>
        <end position="397"/>
    </location>
</feature>
<feature type="compositionally biased region" description="Pro residues" evidence="1">
    <location>
        <begin position="415"/>
        <end position="426"/>
    </location>
</feature>
<feature type="compositionally biased region" description="Low complexity" evidence="1">
    <location>
        <begin position="427"/>
        <end position="442"/>
    </location>
</feature>
<feature type="compositionally biased region" description="Pro residues" evidence="1">
    <location>
        <begin position="803"/>
        <end position="815"/>
    </location>
</feature>
<feature type="compositionally biased region" description="Low complexity" evidence="1">
    <location>
        <begin position="827"/>
        <end position="877"/>
    </location>
</feature>
<feature type="compositionally biased region" description="Basic residues" evidence="1">
    <location>
        <begin position="883"/>
        <end position="892"/>
    </location>
</feature>
<feature type="compositionally biased region" description="Low complexity" evidence="1">
    <location>
        <begin position="933"/>
        <end position="952"/>
    </location>
</feature>